<sequence>MGLDKFKDKNRDELSMIEVARAILEDNGKRMAFADIVNAVQKYLNKSDEEIRERLPQFYTDMNTDGEFISMGENVWALRSWFPYESVDEEVNHPEDEEEDDSRKHHKKVNAFLASATGDDDIIDYDNDDPEDDDLDAATDDSDDDYSDDDSDYDEDNDDADDVLPDGIEGQLSQLNDEDDDEDD</sequence>
<protein>
    <recommendedName>
        <fullName evidence="1">Probable DNA-directed RNA polymerase subunit delta</fullName>
    </recommendedName>
    <alternativeName>
        <fullName evidence="1">RNAP delta factor</fullName>
    </alternativeName>
</protein>
<feature type="chain" id="PRO_0000303125" description="Probable DNA-directed RNA polymerase subunit delta">
    <location>
        <begin position="1"/>
        <end position="184"/>
    </location>
</feature>
<feature type="domain" description="HTH HARE-type" evidence="2">
    <location>
        <begin position="14"/>
        <end position="81"/>
    </location>
</feature>
<feature type="region of interest" description="Disordered" evidence="3">
    <location>
        <begin position="88"/>
        <end position="107"/>
    </location>
</feature>
<feature type="region of interest" description="Disordered" evidence="3">
    <location>
        <begin position="118"/>
        <end position="184"/>
    </location>
</feature>
<feature type="compositionally biased region" description="Acidic residues" evidence="3">
    <location>
        <begin position="118"/>
        <end position="164"/>
    </location>
</feature>
<proteinExistence type="inferred from homology"/>
<accession>Q5FME7</accession>
<dbReference type="EMBL" id="CP000033">
    <property type="protein sequence ID" value="AAV42127.1"/>
    <property type="molecule type" value="Genomic_DNA"/>
</dbReference>
<dbReference type="RefSeq" id="WP_003548904.1">
    <property type="nucleotide sequence ID" value="NC_006814.3"/>
</dbReference>
<dbReference type="RefSeq" id="YP_193158.1">
    <property type="nucleotide sequence ID" value="NC_006814.3"/>
</dbReference>
<dbReference type="SMR" id="Q5FME7"/>
<dbReference type="STRING" id="272621.LBA0232"/>
<dbReference type="GeneID" id="93290663"/>
<dbReference type="KEGG" id="lac:LBA0232"/>
<dbReference type="PATRIC" id="fig|272621.13.peg.222"/>
<dbReference type="eggNOG" id="COG3343">
    <property type="taxonomic scope" value="Bacteria"/>
</dbReference>
<dbReference type="HOGENOM" id="CLU_116648_0_0_9"/>
<dbReference type="OrthoDB" id="401223at2"/>
<dbReference type="BioCyc" id="LACI272621:G1G49-226-MONOMER"/>
<dbReference type="Proteomes" id="UP000006381">
    <property type="component" value="Chromosome"/>
</dbReference>
<dbReference type="GO" id="GO:0000428">
    <property type="term" value="C:DNA-directed RNA polymerase complex"/>
    <property type="evidence" value="ECO:0007669"/>
    <property type="project" value="UniProtKB-KW"/>
</dbReference>
<dbReference type="GO" id="GO:0003899">
    <property type="term" value="F:DNA-directed RNA polymerase activity"/>
    <property type="evidence" value="ECO:0007669"/>
    <property type="project" value="UniProtKB-UniRule"/>
</dbReference>
<dbReference type="GO" id="GO:0006351">
    <property type="term" value="P:DNA-templated transcription"/>
    <property type="evidence" value="ECO:0007669"/>
    <property type="project" value="InterPro"/>
</dbReference>
<dbReference type="GO" id="GO:0006355">
    <property type="term" value="P:regulation of DNA-templated transcription"/>
    <property type="evidence" value="ECO:0007669"/>
    <property type="project" value="UniProtKB-UniRule"/>
</dbReference>
<dbReference type="Gene3D" id="1.10.10.1250">
    <property type="entry name" value="RNA polymerase, subunit delta, N-terminal domain"/>
    <property type="match status" value="1"/>
</dbReference>
<dbReference type="HAMAP" id="MF_00357">
    <property type="entry name" value="RNApol_bact_RpoE"/>
    <property type="match status" value="1"/>
</dbReference>
<dbReference type="InterPro" id="IPR007759">
    <property type="entry name" value="Asxl_HARE-HTH"/>
</dbReference>
<dbReference type="InterPro" id="IPR038087">
    <property type="entry name" value="RNAP_delta_N_dom_sf"/>
</dbReference>
<dbReference type="InterPro" id="IPR029757">
    <property type="entry name" value="RpoE"/>
</dbReference>
<dbReference type="NCBIfam" id="TIGR04567">
    <property type="entry name" value="RNAP_delt_lowGC"/>
    <property type="match status" value="1"/>
</dbReference>
<dbReference type="Pfam" id="PF05066">
    <property type="entry name" value="HARE-HTH"/>
    <property type="match status" value="1"/>
</dbReference>
<dbReference type="PROSITE" id="PS51913">
    <property type="entry name" value="HTH_HARE"/>
    <property type="match status" value="1"/>
</dbReference>
<evidence type="ECO:0000255" key="1">
    <source>
        <dbReference type="HAMAP-Rule" id="MF_00357"/>
    </source>
</evidence>
<evidence type="ECO:0000255" key="2">
    <source>
        <dbReference type="PROSITE-ProRule" id="PRU01261"/>
    </source>
</evidence>
<evidence type="ECO:0000256" key="3">
    <source>
        <dbReference type="SAM" id="MobiDB-lite"/>
    </source>
</evidence>
<name>RPOE_LACAC</name>
<keyword id="KW-0240">DNA-directed RNA polymerase</keyword>
<keyword id="KW-0548">Nucleotidyltransferase</keyword>
<keyword id="KW-1185">Reference proteome</keyword>
<keyword id="KW-0804">Transcription</keyword>
<keyword id="KW-0808">Transferase</keyword>
<gene>
    <name evidence="1" type="primary">rpoE</name>
    <name type="ordered locus">LBA0232</name>
</gene>
<organism>
    <name type="scientific">Lactobacillus acidophilus (strain ATCC 700396 / NCK56 / N2 / NCFM)</name>
    <dbReference type="NCBI Taxonomy" id="272621"/>
    <lineage>
        <taxon>Bacteria</taxon>
        <taxon>Bacillati</taxon>
        <taxon>Bacillota</taxon>
        <taxon>Bacilli</taxon>
        <taxon>Lactobacillales</taxon>
        <taxon>Lactobacillaceae</taxon>
        <taxon>Lactobacillus</taxon>
    </lineage>
</organism>
<reference key="1">
    <citation type="journal article" date="2005" name="Proc. Natl. Acad. Sci. U.S.A.">
        <title>Complete genome sequence of the probiotic lactic acid bacterium Lactobacillus acidophilus NCFM.</title>
        <authorList>
            <person name="Altermann E."/>
            <person name="Russell W.M."/>
            <person name="Azcarate-Peril M.A."/>
            <person name="Barrangou R."/>
            <person name="Buck B.L."/>
            <person name="McAuliffe O."/>
            <person name="Souther N."/>
            <person name="Dobson A."/>
            <person name="Duong T."/>
            <person name="Callanan M."/>
            <person name="Lick S."/>
            <person name="Hamrick A."/>
            <person name="Cano R."/>
            <person name="Klaenhammer T.R."/>
        </authorList>
    </citation>
    <scope>NUCLEOTIDE SEQUENCE [LARGE SCALE GENOMIC DNA]</scope>
    <source>
        <strain>ATCC 700396 / NCK56 / N2 / NCFM</strain>
    </source>
</reference>
<comment type="function">
    <text evidence="1">Participates in both the initiation and recycling phases of transcription. In the presence of the delta subunit, RNAP displays an increased specificity of transcription, a decreased affinity for nucleic acids, and an increased efficiency of RNA synthesis because of enhanced recycling.</text>
</comment>
<comment type="subunit">
    <text evidence="1">RNAP is composed of a core of 2 alpha, a beta and a beta' subunits. The core is associated with a delta subunit and one of several sigma factors.</text>
</comment>
<comment type="similarity">
    <text evidence="1">Belongs to the RpoE family.</text>
</comment>